<protein>
    <recommendedName>
        <fullName evidence="1">Chaperone protein DnaJ</fullName>
    </recommendedName>
</protein>
<proteinExistence type="inferred from homology"/>
<feature type="chain" id="PRO_1000164255" description="Chaperone protein DnaJ">
    <location>
        <begin position="1"/>
        <end position="376"/>
    </location>
</feature>
<feature type="domain" description="J" evidence="1">
    <location>
        <begin position="4"/>
        <end position="68"/>
    </location>
</feature>
<feature type="repeat" description="CXXCXGXG motif">
    <location>
        <begin position="148"/>
        <end position="155"/>
    </location>
</feature>
<feature type="repeat" description="CXXCXGXG motif">
    <location>
        <begin position="165"/>
        <end position="172"/>
    </location>
</feature>
<feature type="repeat" description="CXXCXGXG motif">
    <location>
        <begin position="191"/>
        <end position="198"/>
    </location>
</feature>
<feature type="repeat" description="CXXCXGXG motif">
    <location>
        <begin position="205"/>
        <end position="212"/>
    </location>
</feature>
<feature type="zinc finger region" description="CR-type" evidence="1">
    <location>
        <begin position="135"/>
        <end position="217"/>
    </location>
</feature>
<feature type="binding site" evidence="1">
    <location>
        <position position="148"/>
    </location>
    <ligand>
        <name>Zn(2+)</name>
        <dbReference type="ChEBI" id="CHEBI:29105"/>
        <label>1</label>
    </ligand>
</feature>
<feature type="binding site" evidence="1">
    <location>
        <position position="151"/>
    </location>
    <ligand>
        <name>Zn(2+)</name>
        <dbReference type="ChEBI" id="CHEBI:29105"/>
        <label>1</label>
    </ligand>
</feature>
<feature type="binding site" evidence="1">
    <location>
        <position position="165"/>
    </location>
    <ligand>
        <name>Zn(2+)</name>
        <dbReference type="ChEBI" id="CHEBI:29105"/>
        <label>2</label>
    </ligand>
</feature>
<feature type="binding site" evidence="1">
    <location>
        <position position="168"/>
    </location>
    <ligand>
        <name>Zn(2+)</name>
        <dbReference type="ChEBI" id="CHEBI:29105"/>
        <label>2</label>
    </ligand>
</feature>
<feature type="binding site" evidence="1">
    <location>
        <position position="191"/>
    </location>
    <ligand>
        <name>Zn(2+)</name>
        <dbReference type="ChEBI" id="CHEBI:29105"/>
        <label>2</label>
    </ligand>
</feature>
<feature type="binding site" evidence="1">
    <location>
        <position position="194"/>
    </location>
    <ligand>
        <name>Zn(2+)</name>
        <dbReference type="ChEBI" id="CHEBI:29105"/>
        <label>2</label>
    </ligand>
</feature>
<feature type="binding site" evidence="1">
    <location>
        <position position="205"/>
    </location>
    <ligand>
        <name>Zn(2+)</name>
        <dbReference type="ChEBI" id="CHEBI:29105"/>
        <label>1</label>
    </ligand>
</feature>
<feature type="binding site" evidence="1">
    <location>
        <position position="208"/>
    </location>
    <ligand>
        <name>Zn(2+)</name>
        <dbReference type="ChEBI" id="CHEBI:29105"/>
        <label>1</label>
    </ligand>
</feature>
<evidence type="ECO:0000255" key="1">
    <source>
        <dbReference type="HAMAP-Rule" id="MF_01152"/>
    </source>
</evidence>
<accession>B1WVR2</accession>
<sequence>MPGDYYDILGVDRNASKEDLKRAYRRLARKYHPDVNKEPGAEERFKEINRAYEVLSEPDTRSRYDQFGEAGVSGAGGFNYGDMGDMGGFADIFETIFSGFGGGMGTGGTRRRTGPVKGDDLRLDLKLDFREAVFGGEKEIRIPHLETCQVCKGDGAKPGTGAKTCSTCNGQGQVRRATRTPFGSFAQVSACPACNGQGQVIEEKCEVCNGAGRRQVTEKVKITIPAGVDDGTRLRVSRKGDAGLRGGPQGDLYVYLYVEPDKVFTRDKMNILSEITISYLQAILGCTVTVDTVDGEQELTIPAGTQPNTILTLENLGVPKLGNDAIRGDHLITVKVDIPTRINAEERELLEKLAHIKGQSHGKGGLEGFLGSLFHK</sequence>
<reference key="1">
    <citation type="journal article" date="2008" name="Proc. Natl. Acad. Sci. U.S.A.">
        <title>The genome of Cyanothece 51142, a unicellular diazotrophic cyanobacterium important in the marine nitrogen cycle.</title>
        <authorList>
            <person name="Welsh E.A."/>
            <person name="Liberton M."/>
            <person name="Stoeckel J."/>
            <person name="Loh T."/>
            <person name="Elvitigala T."/>
            <person name="Wang C."/>
            <person name="Wollam A."/>
            <person name="Fulton R.S."/>
            <person name="Clifton S.W."/>
            <person name="Jacobs J.M."/>
            <person name="Aurora R."/>
            <person name="Ghosh B.K."/>
            <person name="Sherman L.A."/>
            <person name="Smith R.D."/>
            <person name="Wilson R.K."/>
            <person name="Pakrasi H.B."/>
        </authorList>
    </citation>
    <scope>NUCLEOTIDE SEQUENCE [LARGE SCALE GENOMIC DNA]</scope>
    <source>
        <strain>ATCC 51142 / BH68</strain>
    </source>
</reference>
<dbReference type="EMBL" id="CP000806">
    <property type="protein sequence ID" value="ACB50649.1"/>
    <property type="molecule type" value="Genomic_DNA"/>
</dbReference>
<dbReference type="RefSeq" id="WP_009544121.1">
    <property type="nucleotide sequence ID" value="NC_010546.1"/>
</dbReference>
<dbReference type="SMR" id="B1WVR2"/>
<dbReference type="STRING" id="43989.cce_1299"/>
<dbReference type="KEGG" id="cyt:cce_1299"/>
<dbReference type="eggNOG" id="COG0484">
    <property type="taxonomic scope" value="Bacteria"/>
</dbReference>
<dbReference type="HOGENOM" id="CLU_017633_0_1_3"/>
<dbReference type="OrthoDB" id="9779889at2"/>
<dbReference type="Proteomes" id="UP000001203">
    <property type="component" value="Chromosome circular"/>
</dbReference>
<dbReference type="GO" id="GO:0005737">
    <property type="term" value="C:cytoplasm"/>
    <property type="evidence" value="ECO:0007669"/>
    <property type="project" value="UniProtKB-SubCell"/>
</dbReference>
<dbReference type="GO" id="GO:0005524">
    <property type="term" value="F:ATP binding"/>
    <property type="evidence" value="ECO:0007669"/>
    <property type="project" value="InterPro"/>
</dbReference>
<dbReference type="GO" id="GO:0031072">
    <property type="term" value="F:heat shock protein binding"/>
    <property type="evidence" value="ECO:0007669"/>
    <property type="project" value="InterPro"/>
</dbReference>
<dbReference type="GO" id="GO:0051082">
    <property type="term" value="F:unfolded protein binding"/>
    <property type="evidence" value="ECO:0007669"/>
    <property type="project" value="UniProtKB-UniRule"/>
</dbReference>
<dbReference type="GO" id="GO:0008270">
    <property type="term" value="F:zinc ion binding"/>
    <property type="evidence" value="ECO:0007669"/>
    <property type="project" value="UniProtKB-UniRule"/>
</dbReference>
<dbReference type="GO" id="GO:0051085">
    <property type="term" value="P:chaperone cofactor-dependent protein refolding"/>
    <property type="evidence" value="ECO:0007669"/>
    <property type="project" value="TreeGrafter"/>
</dbReference>
<dbReference type="GO" id="GO:0006260">
    <property type="term" value="P:DNA replication"/>
    <property type="evidence" value="ECO:0007669"/>
    <property type="project" value="UniProtKB-KW"/>
</dbReference>
<dbReference type="GO" id="GO:0042026">
    <property type="term" value="P:protein refolding"/>
    <property type="evidence" value="ECO:0007669"/>
    <property type="project" value="TreeGrafter"/>
</dbReference>
<dbReference type="GO" id="GO:0009408">
    <property type="term" value="P:response to heat"/>
    <property type="evidence" value="ECO:0007669"/>
    <property type="project" value="InterPro"/>
</dbReference>
<dbReference type="CDD" id="cd06257">
    <property type="entry name" value="DnaJ"/>
    <property type="match status" value="1"/>
</dbReference>
<dbReference type="CDD" id="cd10747">
    <property type="entry name" value="DnaJ_C"/>
    <property type="match status" value="1"/>
</dbReference>
<dbReference type="CDD" id="cd10719">
    <property type="entry name" value="DnaJ_zf"/>
    <property type="match status" value="1"/>
</dbReference>
<dbReference type="FunFam" id="2.60.260.20:FF:000005">
    <property type="entry name" value="Chaperone protein dnaJ 1, mitochondrial"/>
    <property type="match status" value="1"/>
</dbReference>
<dbReference type="FunFam" id="2.10.230.10:FF:000002">
    <property type="entry name" value="Molecular chaperone DnaJ"/>
    <property type="match status" value="1"/>
</dbReference>
<dbReference type="Gene3D" id="1.10.287.110">
    <property type="entry name" value="DnaJ domain"/>
    <property type="match status" value="1"/>
</dbReference>
<dbReference type="Gene3D" id="2.10.230.10">
    <property type="entry name" value="Heat shock protein DnaJ, cysteine-rich domain"/>
    <property type="match status" value="1"/>
</dbReference>
<dbReference type="Gene3D" id="2.60.260.20">
    <property type="entry name" value="Urease metallochaperone UreE, N-terminal domain"/>
    <property type="match status" value="2"/>
</dbReference>
<dbReference type="HAMAP" id="MF_01152">
    <property type="entry name" value="DnaJ"/>
    <property type="match status" value="1"/>
</dbReference>
<dbReference type="InterPro" id="IPR012724">
    <property type="entry name" value="DnaJ"/>
</dbReference>
<dbReference type="InterPro" id="IPR002939">
    <property type="entry name" value="DnaJ_C"/>
</dbReference>
<dbReference type="InterPro" id="IPR001623">
    <property type="entry name" value="DnaJ_domain"/>
</dbReference>
<dbReference type="InterPro" id="IPR008971">
    <property type="entry name" value="HSP40/DnaJ_pept-bd"/>
</dbReference>
<dbReference type="InterPro" id="IPR001305">
    <property type="entry name" value="HSP_DnaJ_Cys-rich_dom"/>
</dbReference>
<dbReference type="InterPro" id="IPR036410">
    <property type="entry name" value="HSP_DnaJ_Cys-rich_dom_sf"/>
</dbReference>
<dbReference type="InterPro" id="IPR036869">
    <property type="entry name" value="J_dom_sf"/>
</dbReference>
<dbReference type="NCBIfam" id="TIGR02349">
    <property type="entry name" value="DnaJ_bact"/>
    <property type="match status" value="1"/>
</dbReference>
<dbReference type="NCBIfam" id="NF008035">
    <property type="entry name" value="PRK10767.1"/>
    <property type="match status" value="1"/>
</dbReference>
<dbReference type="NCBIfam" id="NF010886">
    <property type="entry name" value="PRK14293.1"/>
    <property type="match status" value="1"/>
</dbReference>
<dbReference type="PANTHER" id="PTHR43096:SF10">
    <property type="entry name" value="CHAPERONE PROTEIN DNAJ A6, CHLOROPLASTIC"/>
    <property type="match status" value="1"/>
</dbReference>
<dbReference type="PANTHER" id="PTHR43096">
    <property type="entry name" value="DNAJ HOMOLOG 1, MITOCHONDRIAL-RELATED"/>
    <property type="match status" value="1"/>
</dbReference>
<dbReference type="Pfam" id="PF00226">
    <property type="entry name" value="DnaJ"/>
    <property type="match status" value="1"/>
</dbReference>
<dbReference type="Pfam" id="PF01556">
    <property type="entry name" value="DnaJ_C"/>
    <property type="match status" value="1"/>
</dbReference>
<dbReference type="Pfam" id="PF00684">
    <property type="entry name" value="DnaJ_CXXCXGXG"/>
    <property type="match status" value="1"/>
</dbReference>
<dbReference type="PRINTS" id="PR00625">
    <property type="entry name" value="JDOMAIN"/>
</dbReference>
<dbReference type="SMART" id="SM00271">
    <property type="entry name" value="DnaJ"/>
    <property type="match status" value="1"/>
</dbReference>
<dbReference type="SUPFAM" id="SSF46565">
    <property type="entry name" value="Chaperone J-domain"/>
    <property type="match status" value="1"/>
</dbReference>
<dbReference type="SUPFAM" id="SSF57938">
    <property type="entry name" value="DnaJ/Hsp40 cysteine-rich domain"/>
    <property type="match status" value="1"/>
</dbReference>
<dbReference type="SUPFAM" id="SSF49493">
    <property type="entry name" value="HSP40/DnaJ peptide-binding domain"/>
    <property type="match status" value="2"/>
</dbReference>
<dbReference type="PROSITE" id="PS50076">
    <property type="entry name" value="DNAJ_2"/>
    <property type="match status" value="1"/>
</dbReference>
<dbReference type="PROSITE" id="PS51188">
    <property type="entry name" value="ZF_CR"/>
    <property type="match status" value="1"/>
</dbReference>
<organism>
    <name type="scientific">Crocosphaera subtropica (strain ATCC 51142 / BH68)</name>
    <name type="common">Cyanothece sp. (strain ATCC 51142)</name>
    <dbReference type="NCBI Taxonomy" id="43989"/>
    <lineage>
        <taxon>Bacteria</taxon>
        <taxon>Bacillati</taxon>
        <taxon>Cyanobacteriota</taxon>
        <taxon>Cyanophyceae</taxon>
        <taxon>Oscillatoriophycideae</taxon>
        <taxon>Chroococcales</taxon>
        <taxon>Aphanothecaceae</taxon>
        <taxon>Crocosphaera</taxon>
        <taxon>Crocosphaera subtropica</taxon>
    </lineage>
</organism>
<gene>
    <name evidence="1" type="primary">dnaJ</name>
    <name type="ordered locus">cce_1299</name>
</gene>
<name>DNAJ_CROS5</name>
<comment type="function">
    <text evidence="1">Participates actively in the response to hyperosmotic and heat shock by preventing the aggregation of stress-denatured proteins and by disaggregating proteins, also in an autonomous, DnaK-independent fashion. Unfolded proteins bind initially to DnaJ; upon interaction with the DnaJ-bound protein, DnaK hydrolyzes its bound ATP, resulting in the formation of a stable complex. GrpE releases ADP from DnaK; ATP binding to DnaK triggers the release of the substrate protein, thus completing the reaction cycle. Several rounds of ATP-dependent interactions between DnaJ, DnaK and GrpE are required for fully efficient folding. Also involved, together with DnaK and GrpE, in the DNA replication of plasmids through activation of initiation proteins.</text>
</comment>
<comment type="cofactor">
    <cofactor evidence="1">
        <name>Zn(2+)</name>
        <dbReference type="ChEBI" id="CHEBI:29105"/>
    </cofactor>
    <text evidence="1">Binds 2 Zn(2+) ions per monomer.</text>
</comment>
<comment type="subunit">
    <text evidence="1">Homodimer.</text>
</comment>
<comment type="subcellular location">
    <subcellularLocation>
        <location evidence="1">Cytoplasm</location>
    </subcellularLocation>
</comment>
<comment type="domain">
    <text evidence="1">The J domain is necessary and sufficient to stimulate DnaK ATPase activity. Zinc center 1 plays an important role in the autonomous, DnaK-independent chaperone activity of DnaJ. Zinc center 2 is essential for interaction with DnaK and for DnaJ activity.</text>
</comment>
<comment type="similarity">
    <text evidence="1">Belongs to the DnaJ family.</text>
</comment>
<keyword id="KW-0143">Chaperone</keyword>
<keyword id="KW-0963">Cytoplasm</keyword>
<keyword id="KW-0235">DNA replication</keyword>
<keyword id="KW-0479">Metal-binding</keyword>
<keyword id="KW-1185">Reference proteome</keyword>
<keyword id="KW-0677">Repeat</keyword>
<keyword id="KW-0346">Stress response</keyword>
<keyword id="KW-0862">Zinc</keyword>
<keyword id="KW-0863">Zinc-finger</keyword>